<accession>Q9GL30</accession>
<accession>A6QPQ7</accession>
<accession>F1MBV7</accession>
<protein>
    <recommendedName>
        <fullName>Phospholipase B-like 1</fullName>
        <ecNumber>3.1.1.-</ecNumber>
    </recommendedName>
    <alternativeName>
        <fullName>LAMA-like protein 1</fullName>
    </alternativeName>
    <alternativeName>
        <fullName>Lamina ancestor homolog 1</fullName>
    </alternativeName>
    <alternativeName>
        <fullName>Phospholipase B domain-containing protein 1</fullName>
    </alternativeName>
    <component>
        <recommendedName>
            <fullName>Phospholipase B-like 1 chain A</fullName>
        </recommendedName>
    </component>
    <component>
        <recommendedName>
            <fullName>Phospholipase B-like 1 chain B</fullName>
        </recommendedName>
    </component>
    <component>
        <recommendedName>
            <fullName>Phospholipase B-like 1 chain C</fullName>
        </recommendedName>
    </component>
</protein>
<organism>
    <name type="scientific">Bos taurus</name>
    <name type="common">Bovine</name>
    <dbReference type="NCBI Taxonomy" id="9913"/>
    <lineage>
        <taxon>Eukaryota</taxon>
        <taxon>Metazoa</taxon>
        <taxon>Chordata</taxon>
        <taxon>Craniata</taxon>
        <taxon>Vertebrata</taxon>
        <taxon>Euteleostomi</taxon>
        <taxon>Mammalia</taxon>
        <taxon>Eutheria</taxon>
        <taxon>Laurasiatheria</taxon>
        <taxon>Artiodactyla</taxon>
        <taxon>Ruminantia</taxon>
        <taxon>Pecora</taxon>
        <taxon>Bovidae</taxon>
        <taxon>Bovinae</taxon>
        <taxon>Bos</taxon>
    </lineage>
</organism>
<comment type="function">
    <text evidence="1 2">Exhibits a weak phospholipase activity, acting on various phospholipids, including phosphatidylcholine, phosphatidylinositol, phosphatidylethanolamine and lysophospholipids (By similarity). However, in view of the small size of the putative binding pocket, it has been proposed that it may act rather as an amidase or a peptidase (PubMed:23934913).</text>
</comment>
<comment type="subunit">
    <text>May form a homodimer, each monomer is composed of a chain A and a chain B.</text>
</comment>
<comment type="subcellular location">
    <subcellularLocation>
        <location evidence="2">Lysosome</location>
    </subcellularLocation>
</comment>
<comment type="alternative products">
    <event type="alternative splicing"/>
    <isoform>
        <id>Q9GL30-1</id>
        <name>1</name>
        <sequence type="displayed"/>
    </isoform>
    <isoform>
        <id>Q9GL30-2</id>
        <name>2</name>
        <sequence type="described" ref="VSP_053706"/>
    </isoform>
</comment>
<comment type="PTM">
    <text>The maturation cleavages that produces chains A and B are required to open the putative substrate binding pocket. Both chains A and B remain associated in the mature protein.</text>
</comment>
<comment type="similarity">
    <text evidence="4">Belongs to the phospholipase B-like family.</text>
</comment>
<reference key="1">
    <citation type="journal article" date="2009" name="Genome Biol.">
        <title>A whole-genome assembly of the domestic cow, Bos taurus.</title>
        <authorList>
            <person name="Zimin A.V."/>
            <person name="Delcher A.L."/>
            <person name="Florea L."/>
            <person name="Kelley D.R."/>
            <person name="Schatz M.C."/>
            <person name="Puiu D."/>
            <person name="Hanrahan F."/>
            <person name="Pertea G."/>
            <person name="Van Tassell C.P."/>
            <person name="Sonstegard T.S."/>
            <person name="Marcais G."/>
            <person name="Roberts M."/>
            <person name="Subramanian P."/>
            <person name="Yorke J.A."/>
            <person name="Salzberg S.L."/>
        </authorList>
    </citation>
    <scope>NUCLEOTIDE SEQUENCE [LARGE SCALE GENOMIC DNA]</scope>
    <source>
        <strain>Hereford</strain>
    </source>
</reference>
<reference key="2">
    <citation type="submission" date="2007-07" db="EMBL/GenBank/DDBJ databases">
        <authorList>
            <consortium name="NIH - Mammalian Gene Collection (MGC) project"/>
        </authorList>
    </citation>
    <scope>NUCLEOTIDE SEQUENCE [LARGE SCALE MRNA] (ISOFORM 2)</scope>
    <source>
        <strain>Hereford</strain>
        <tissue>Placenta</tissue>
    </source>
</reference>
<reference key="3">
    <citation type="submission" date="2000-10" db="EMBL/GenBank/DDBJ databases">
        <title>Purification and identification of an unknown protein from bovine kidneys.</title>
        <authorList>
            <person name="Heikinheimo P."/>
        </authorList>
    </citation>
    <scope>NUCLEOTIDE SEQUENCE [MRNA] OF 21-545 (ISOFORM 1)</scope>
    <source>
        <tissue>Kidney</tissue>
    </source>
</reference>
<reference key="4">
    <citation type="journal article" date="2014" name="Proteins">
        <title>Is the bovine lysosomal phospholipase B-like protein an amidase?</title>
        <authorList>
            <person name="Repo H."/>
            <person name="Kuokkanen E."/>
            <person name="Oksanen E."/>
            <person name="Goldman A."/>
            <person name="Heikinheimo P."/>
        </authorList>
    </citation>
    <scope>X-RAY CRYSTALLOGRAPHY (1.89 ANGSTROMS) OF 36-205 AND 225-545</scope>
    <scope>PARTIAL PROTEIN SEQUENCE</scope>
    <scope>FUNCTION</scope>
    <scope>HOMODIMERIZATION</scope>
    <scope>SUBCELLULAR LOCATION</scope>
    <scope>SIGNAL SEQUENCE CLEAVAGE SITE</scope>
    <scope>GLYCOSYLATION AT ASN-68; ASN-305; ASN-363; ASN-408 AND ASN-523</scope>
    <source>
        <tissue>Kidney</tissue>
    </source>
</reference>
<dbReference type="EC" id="3.1.1.-"/>
<dbReference type="EMBL" id="DAAA02014236">
    <property type="status" value="NOT_ANNOTATED_CDS"/>
    <property type="molecule type" value="Genomic_DNA"/>
</dbReference>
<dbReference type="EMBL" id="DAAA02014237">
    <property type="status" value="NOT_ANNOTATED_CDS"/>
    <property type="molecule type" value="Genomic_DNA"/>
</dbReference>
<dbReference type="EMBL" id="DAAA02014238">
    <property type="status" value="NOT_ANNOTATED_CDS"/>
    <property type="molecule type" value="Genomic_DNA"/>
</dbReference>
<dbReference type="EMBL" id="DAAA02014239">
    <property type="status" value="NOT_ANNOTATED_CDS"/>
    <property type="molecule type" value="Genomic_DNA"/>
</dbReference>
<dbReference type="EMBL" id="DAAA02014240">
    <property type="status" value="NOT_ANNOTATED_CDS"/>
    <property type="molecule type" value="Genomic_DNA"/>
</dbReference>
<dbReference type="EMBL" id="BC149435">
    <property type="protein sequence ID" value="AAI49436.1"/>
    <property type="molecule type" value="mRNA"/>
</dbReference>
<dbReference type="EMBL" id="AJ299408">
    <property type="protein sequence ID" value="CAC13971.1"/>
    <property type="molecule type" value="mRNA"/>
</dbReference>
<dbReference type="RefSeq" id="NP_001094514.2">
    <molecule id="Q9GL30-2"/>
    <property type="nucleotide sequence ID" value="NM_001101044.2"/>
</dbReference>
<dbReference type="RefSeq" id="NP_001159770.1">
    <molecule id="Q9GL30-1"/>
    <property type="nucleotide sequence ID" value="NM_001166298.1"/>
</dbReference>
<dbReference type="PDB" id="4BWC">
    <property type="method" value="X-ray"/>
    <property type="resolution" value="1.89 A"/>
    <property type="chains" value="A=36-205, B=225-545"/>
</dbReference>
<dbReference type="PDBsum" id="4BWC"/>
<dbReference type="SMR" id="Q9GL30"/>
<dbReference type="FunCoup" id="Q9GL30">
    <property type="interactions" value="77"/>
</dbReference>
<dbReference type="STRING" id="9913.ENSBTAP00000065239"/>
<dbReference type="MEROPS" id="C95.002"/>
<dbReference type="GlyCosmos" id="Q9GL30">
    <property type="glycosylation" value="5 sites, No reported glycans"/>
</dbReference>
<dbReference type="GlyGen" id="Q9GL30">
    <property type="glycosylation" value="5 sites"/>
</dbReference>
<dbReference type="iPTMnet" id="Q9GL30"/>
<dbReference type="PaxDb" id="9913-ENSBTAP00000020677"/>
<dbReference type="Ensembl" id="ENSBTAT00000020677.6">
    <molecule id="Q9GL30-1"/>
    <property type="protein sequence ID" value="ENSBTAP00000020677.5"/>
    <property type="gene ID" value="ENSBTAG00000015562.7"/>
</dbReference>
<dbReference type="Ensembl" id="ENSBTAT00000056815.3">
    <molecule id="Q9GL30-2"/>
    <property type="protein sequence ID" value="ENSBTAP00000050579.2"/>
    <property type="gene ID" value="ENSBTAG00000015562.7"/>
</dbReference>
<dbReference type="GeneID" id="317710"/>
<dbReference type="KEGG" id="bta:317710"/>
<dbReference type="CTD" id="79887"/>
<dbReference type="VEuPathDB" id="HostDB:ENSBTAG00000015562"/>
<dbReference type="eggNOG" id="KOG3774">
    <property type="taxonomic scope" value="Eukaryota"/>
</dbReference>
<dbReference type="GeneTree" id="ENSGT00530000063509"/>
<dbReference type="HOGENOM" id="CLU_027106_3_0_1"/>
<dbReference type="InParanoid" id="Q9GL30"/>
<dbReference type="OrthoDB" id="419508at2759"/>
<dbReference type="TreeFam" id="TF315042"/>
<dbReference type="Reactome" id="R-BTA-1482788">
    <property type="pathway name" value="Acyl chain remodelling of PC"/>
</dbReference>
<dbReference type="Reactome" id="R-BTA-1482839">
    <property type="pathway name" value="Acyl chain remodelling of PE"/>
</dbReference>
<dbReference type="Reactome" id="R-BTA-1482922">
    <property type="pathway name" value="Acyl chain remodelling of PI"/>
</dbReference>
<dbReference type="Reactome" id="R-BTA-1483115">
    <property type="pathway name" value="Hydrolysis of LPC"/>
</dbReference>
<dbReference type="EvolutionaryTrace" id="Q9GL30"/>
<dbReference type="Proteomes" id="UP000009136">
    <property type="component" value="Chromosome 5"/>
</dbReference>
<dbReference type="GO" id="GO:0005576">
    <property type="term" value="C:extracellular region"/>
    <property type="evidence" value="ECO:0000318"/>
    <property type="project" value="GO_Central"/>
</dbReference>
<dbReference type="GO" id="GO:0005764">
    <property type="term" value="C:lysosome"/>
    <property type="evidence" value="ECO:0007669"/>
    <property type="project" value="UniProtKB-SubCell"/>
</dbReference>
<dbReference type="GO" id="GO:0004620">
    <property type="term" value="F:phospholipase activity"/>
    <property type="evidence" value="ECO:0000318"/>
    <property type="project" value="GO_Central"/>
</dbReference>
<dbReference type="GO" id="GO:0009395">
    <property type="term" value="P:phospholipid catabolic process"/>
    <property type="evidence" value="ECO:0000318"/>
    <property type="project" value="GO_Central"/>
</dbReference>
<dbReference type="FunFam" id="3.60.60.20:FF:000001">
    <property type="entry name" value="Phospholipase B-like"/>
    <property type="match status" value="1"/>
</dbReference>
<dbReference type="Gene3D" id="3.60.60.20">
    <property type="match status" value="1"/>
</dbReference>
<dbReference type="Gene3D" id="2.10.70.60">
    <property type="entry name" value="Phospholipase B-like, domain 1"/>
    <property type="match status" value="1"/>
</dbReference>
<dbReference type="Gene3D" id="1.10.439.20">
    <property type="entry name" value="Phospholipase B-like, domain 2"/>
    <property type="match status" value="1"/>
</dbReference>
<dbReference type="InterPro" id="IPR007000">
    <property type="entry name" value="PLipase_B-like"/>
</dbReference>
<dbReference type="InterPro" id="IPR043040">
    <property type="entry name" value="PLipase_B-like_dom1"/>
</dbReference>
<dbReference type="InterPro" id="IPR043041">
    <property type="entry name" value="PLipase_B-like_dom2"/>
</dbReference>
<dbReference type="InterPro" id="IPR043042">
    <property type="entry name" value="PLipase_B-like_dom3"/>
</dbReference>
<dbReference type="PANTHER" id="PTHR12370:SF1">
    <property type="entry name" value="PHOSPHOLIPASE B-LIKE 1"/>
    <property type="match status" value="1"/>
</dbReference>
<dbReference type="PANTHER" id="PTHR12370">
    <property type="entry name" value="PHOSPHOLIPASE B-RELATED"/>
    <property type="match status" value="1"/>
</dbReference>
<dbReference type="Pfam" id="PF04916">
    <property type="entry name" value="Phospholip_B"/>
    <property type="match status" value="1"/>
</dbReference>
<feature type="signal peptide" evidence="2">
    <location>
        <begin position="1"/>
        <end position="35"/>
    </location>
</feature>
<feature type="chain" id="PRO_5000066752" description="Phospholipase B-like 1">
    <location>
        <begin position="36"/>
        <end position="545"/>
    </location>
</feature>
<feature type="chain" id="PRO_0000425417" description="Phospholipase B-like 1 chain A">
    <location>
        <begin position="36"/>
        <end position="205"/>
    </location>
</feature>
<feature type="chain" id="PRO_0000425418" description="Phospholipase B-like 1 chain C">
    <location>
        <begin position="90"/>
        <end position="205"/>
    </location>
</feature>
<feature type="propeptide" id="PRO_0000425419" description="Removed in mature form">
    <location>
        <begin position="206"/>
        <end position="224"/>
    </location>
</feature>
<feature type="chain" id="PRO_0000425420" description="Phospholipase B-like 1 chain B">
    <location>
        <begin position="225"/>
        <end position="545"/>
    </location>
</feature>
<feature type="glycosylation site" description="N-linked (GlcNAc...) (high mannose) asparagine; alternate" evidence="2">
    <location>
        <position position="68"/>
    </location>
</feature>
<feature type="glycosylation site" description="N-linked (GlcNAc...) (hybrid) asparagine; alternate" evidence="2">
    <location>
        <position position="68"/>
    </location>
</feature>
<feature type="glycosylation site" description="N-linked (GlcNAc...) (high mannose) asparagine; alternate" evidence="2">
    <location>
        <position position="305"/>
    </location>
</feature>
<feature type="glycosylation site" description="N-linked (GlcNAc...) (hybrid) asparagine; alternate" evidence="2">
    <location>
        <position position="305"/>
    </location>
</feature>
<feature type="glycosylation site" description="N-linked (GlcNAc...) (high mannose) asparagine; alternate" evidence="2">
    <location>
        <position position="363"/>
    </location>
</feature>
<feature type="glycosylation site" description="N-linked (GlcNAc...) (hybrid) asparagine; alternate" evidence="2">
    <location>
        <position position="363"/>
    </location>
</feature>
<feature type="glycosylation site" description="N-linked (GlcNAc...) (high mannose) asparagine; alternate" evidence="2">
    <location>
        <position position="408"/>
    </location>
</feature>
<feature type="glycosylation site" description="N-linked (GlcNAc...) (hybrid) asparagine; alternate" evidence="2">
    <location>
        <position position="408"/>
    </location>
</feature>
<feature type="glycosylation site" description="N-linked (GlcNAc...) (high mannose) asparagine; alternate" evidence="2">
    <location>
        <position position="523"/>
    </location>
</feature>
<feature type="glycosylation site" description="N-linked (GlcNAc...) (hybrid) asparagine; alternate" evidence="2">
    <location>
        <position position="523"/>
    </location>
</feature>
<feature type="disulfide bond">
    <location>
        <begin position="467"/>
        <end position="472"/>
    </location>
</feature>
<feature type="disulfide bond">
    <location>
        <begin position="471"/>
        <end position="486"/>
    </location>
</feature>
<feature type="splice variant" id="VSP_053706" description="In isoform 2." evidence="3">
    <location>
        <begin position="280"/>
        <end position="393"/>
    </location>
</feature>
<feature type="sequence conflict" description="In Ref. 2; AAI49436." evidence="4" ref="2">
    <original>A</original>
    <variation>E</variation>
    <location>
        <position position="173"/>
    </location>
</feature>
<feature type="strand" evidence="5">
    <location>
        <begin position="37"/>
        <end position="45"/>
    </location>
</feature>
<feature type="turn" evidence="5">
    <location>
        <begin position="46"/>
        <end position="49"/>
    </location>
</feature>
<feature type="strand" evidence="5">
    <location>
        <begin position="50"/>
        <end position="56"/>
    </location>
</feature>
<feature type="strand" evidence="5">
    <location>
        <begin position="61"/>
        <end position="68"/>
    </location>
</feature>
<feature type="helix" evidence="5">
    <location>
        <begin position="71"/>
        <end position="74"/>
    </location>
</feature>
<feature type="strand" evidence="5">
    <location>
        <begin position="75"/>
        <end position="84"/>
    </location>
</feature>
<feature type="strand" evidence="5">
    <location>
        <begin position="86"/>
        <end position="88"/>
    </location>
</feature>
<feature type="helix" evidence="5">
    <location>
        <begin position="92"/>
        <end position="122"/>
    </location>
</feature>
<feature type="helix" evidence="5">
    <location>
        <begin position="126"/>
        <end position="149"/>
    </location>
</feature>
<feature type="turn" evidence="5">
    <location>
        <begin position="150"/>
        <end position="152"/>
    </location>
</feature>
<feature type="helix" evidence="5">
    <location>
        <begin position="154"/>
        <end position="180"/>
    </location>
</feature>
<feature type="helix" evidence="5">
    <location>
        <begin position="187"/>
        <end position="194"/>
    </location>
</feature>
<feature type="helix" evidence="5">
    <location>
        <begin position="196"/>
        <end position="202"/>
    </location>
</feature>
<feature type="strand" evidence="5">
    <location>
        <begin position="226"/>
        <end position="231"/>
    </location>
</feature>
<feature type="strand" evidence="5">
    <location>
        <begin position="238"/>
        <end position="243"/>
    </location>
</feature>
<feature type="strand" evidence="5">
    <location>
        <begin position="245"/>
        <end position="247"/>
    </location>
</feature>
<feature type="helix" evidence="5">
    <location>
        <begin position="248"/>
        <end position="250"/>
    </location>
</feature>
<feature type="strand" evidence="5">
    <location>
        <begin position="253"/>
        <end position="260"/>
    </location>
</feature>
<feature type="strand" evidence="5">
    <location>
        <begin position="271"/>
        <end position="276"/>
    </location>
</feature>
<feature type="strand" evidence="5">
    <location>
        <begin position="287"/>
        <end position="290"/>
    </location>
</feature>
<feature type="strand" evidence="5">
    <location>
        <begin position="293"/>
        <end position="300"/>
    </location>
</feature>
<feature type="helix" evidence="5">
    <location>
        <begin position="306"/>
        <end position="309"/>
    </location>
</feature>
<feature type="strand" evidence="5">
    <location>
        <begin position="314"/>
        <end position="317"/>
    </location>
</feature>
<feature type="helix" evidence="5">
    <location>
        <begin position="319"/>
        <end position="329"/>
    </location>
</feature>
<feature type="helix" evidence="5">
    <location>
        <begin position="333"/>
        <end position="340"/>
    </location>
</feature>
<feature type="turn" evidence="5">
    <location>
        <begin position="341"/>
        <end position="343"/>
    </location>
</feature>
<feature type="strand" evidence="5">
    <location>
        <begin position="350"/>
        <end position="356"/>
    </location>
</feature>
<feature type="helix" evidence="5">
    <location>
        <begin position="357"/>
        <end position="359"/>
    </location>
</feature>
<feature type="turn" evidence="5">
    <location>
        <begin position="362"/>
        <end position="364"/>
    </location>
</feature>
<feature type="strand" evidence="5">
    <location>
        <begin position="370"/>
        <end position="377"/>
    </location>
</feature>
<feature type="strand" evidence="5">
    <location>
        <begin position="380"/>
        <end position="385"/>
    </location>
</feature>
<feature type="helix" evidence="5">
    <location>
        <begin position="387"/>
        <end position="391"/>
    </location>
</feature>
<feature type="strand" evidence="5">
    <location>
        <begin position="394"/>
        <end position="400"/>
    </location>
</feature>
<feature type="helix" evidence="5">
    <location>
        <begin position="404"/>
        <end position="409"/>
    </location>
</feature>
<feature type="helix" evidence="5">
    <location>
        <begin position="412"/>
        <end position="419"/>
    </location>
</feature>
<feature type="helix" evidence="5">
    <location>
        <begin position="421"/>
        <end position="423"/>
    </location>
</feature>
<feature type="turn" evidence="5">
    <location>
        <begin position="425"/>
        <end position="427"/>
    </location>
</feature>
<feature type="helix" evidence="5">
    <location>
        <begin position="429"/>
        <end position="437"/>
    </location>
</feature>
<feature type="helix" evidence="5">
    <location>
        <begin position="438"/>
        <end position="440"/>
    </location>
</feature>
<feature type="helix" evidence="5">
    <location>
        <begin position="444"/>
        <end position="451"/>
    </location>
</feature>
<feature type="turn" evidence="5">
    <location>
        <begin position="456"/>
        <end position="458"/>
    </location>
</feature>
<feature type="helix" evidence="5">
    <location>
        <begin position="460"/>
        <end position="462"/>
    </location>
</feature>
<feature type="strand" evidence="5">
    <location>
        <begin position="468"/>
        <end position="471"/>
    </location>
</feature>
<feature type="helix" evidence="5">
    <location>
        <begin position="474"/>
        <end position="476"/>
    </location>
</feature>
<feature type="strand" evidence="5">
    <location>
        <begin position="478"/>
        <end position="480"/>
    </location>
</feature>
<feature type="strand" evidence="5">
    <location>
        <begin position="483"/>
        <end position="486"/>
    </location>
</feature>
<feature type="strand" evidence="5">
    <location>
        <begin position="488"/>
        <end position="493"/>
    </location>
</feature>
<feature type="helix" evidence="5">
    <location>
        <begin position="494"/>
        <end position="498"/>
    </location>
</feature>
<feature type="strand" evidence="5">
    <location>
        <begin position="502"/>
        <end position="508"/>
    </location>
</feature>
<feature type="turn" evidence="5">
    <location>
        <begin position="511"/>
        <end position="513"/>
    </location>
</feature>
<feature type="helix" evidence="5">
    <location>
        <begin position="519"/>
        <end position="522"/>
    </location>
</feature>
<feature type="strand" evidence="5">
    <location>
        <begin position="532"/>
        <end position="534"/>
    </location>
</feature>
<feature type="strand" evidence="5">
    <location>
        <begin position="539"/>
        <end position="541"/>
    </location>
</feature>
<proteinExistence type="evidence at protein level"/>
<keyword id="KW-0002">3D-structure</keyword>
<keyword id="KW-0025">Alternative splicing</keyword>
<keyword id="KW-0903">Direct protein sequencing</keyword>
<keyword id="KW-1015">Disulfide bond</keyword>
<keyword id="KW-0325">Glycoprotein</keyword>
<keyword id="KW-0378">Hydrolase</keyword>
<keyword id="KW-0442">Lipid degradation</keyword>
<keyword id="KW-0443">Lipid metabolism</keyword>
<keyword id="KW-0458">Lysosome</keyword>
<keyword id="KW-1185">Reference proteome</keyword>
<keyword id="KW-0732">Signal</keyword>
<name>PLBL1_BOVIN</name>
<evidence type="ECO:0000250" key="1"/>
<evidence type="ECO:0000269" key="2">
    <source>
    </source>
</evidence>
<evidence type="ECO:0000303" key="3">
    <source ref="2"/>
</evidence>
<evidence type="ECO:0000305" key="4"/>
<evidence type="ECO:0007829" key="5">
    <source>
        <dbReference type="PDB" id="4BWC"/>
    </source>
</evidence>
<gene>
    <name type="primary">PLBD1</name>
</gene>
<sequence>MSRHSQDERLGLPQPPALLPLLLLLLAVAVPLSQAGVYYATAYWMPTEKTIQVKNVLDRKGDAYGFYNNSVKTTGWGILEIKAGYGSQSLSNEIIMFAAGFLEGYLTAPHMDDHFTNLYPQLIKKRSMLNKVQDFLTKQDQWTRENIKYYKSDPFWRHADYVMAQMDGLFAGATKRAVLEGKKPMTLFQIQFLNAIGDLLDLIPSLSPTKNSSLKFFKRWDMGHCSALIKVLPGFENIFFAHSSWYTYAAMLRIYKHWDFNIVDKDTSSSRLSFSSYPGFLESLDDFYLLSSGLVLLQTTNSVYNKTLLQHVVPQSLLAWQRVRVASMMANNGKQWAEVFSKYNSGTYNNQYMVLDLKKVNLNHSLDEGTLYIVEQIPTYVEYSEQTAVLRRGYWPSYNIPFHEKVYNWSGYPILVKKLGLDYSYDLASRAKIFRRDQGKVTDMESMKYIMRYNNYKQDPYSKGDPCNTVCCREDLNSHSPSPGGCYDTKVADIYLASKYKAYAISGPTVQGGLPVFHWSRFNKTLHEGMPEAYNFDFITMKPIL</sequence>